<accession>P12290</accession>
<comment type="function">
    <text evidence="1">The beta subunit is responsible for the synthesis of L-tryptophan from indole and L-serine.</text>
</comment>
<comment type="catalytic activity">
    <reaction>
        <text>(1S,2R)-1-C-(indol-3-yl)glycerol 3-phosphate + L-serine = D-glyceraldehyde 3-phosphate + L-tryptophan + H2O</text>
        <dbReference type="Rhea" id="RHEA:10532"/>
        <dbReference type="ChEBI" id="CHEBI:15377"/>
        <dbReference type="ChEBI" id="CHEBI:33384"/>
        <dbReference type="ChEBI" id="CHEBI:57912"/>
        <dbReference type="ChEBI" id="CHEBI:58866"/>
        <dbReference type="ChEBI" id="CHEBI:59776"/>
        <dbReference type="EC" id="4.2.1.20"/>
    </reaction>
</comment>
<comment type="cofactor">
    <cofactor evidence="1">
        <name>pyridoxal 5'-phosphate</name>
        <dbReference type="ChEBI" id="CHEBI:597326"/>
    </cofactor>
</comment>
<comment type="pathway">
    <text>Amino-acid biosynthesis; L-tryptophan biosynthesis; L-tryptophan from chorismate: step 5/5.</text>
</comment>
<comment type="subunit">
    <text evidence="1">Tetramer of two alpha and two beta chains.</text>
</comment>
<comment type="similarity">
    <text evidence="2">Belongs to the TrpB family.</text>
</comment>
<comment type="sequence caution" evidence="2">
    <conflict type="erroneous initiation">
        <sequence resource="EMBL-CDS" id="AAK25506"/>
    </conflict>
</comment>
<dbReference type="EC" id="4.2.1.20"/>
<dbReference type="EMBL" id="M19129">
    <property type="protein sequence ID" value="AAA23057.1"/>
    <property type="molecule type" value="Genomic_DNA"/>
</dbReference>
<dbReference type="EMBL" id="AE005673">
    <property type="protein sequence ID" value="AAK25506.1"/>
    <property type="status" value="ALT_INIT"/>
    <property type="molecule type" value="Genomic_DNA"/>
</dbReference>
<dbReference type="PIR" id="C43664">
    <property type="entry name" value="C43664"/>
</dbReference>
<dbReference type="PIR" id="F87688">
    <property type="entry name" value="F87688"/>
</dbReference>
<dbReference type="RefSeq" id="NP_422338.1">
    <property type="nucleotide sequence ID" value="NC_002696.2"/>
</dbReference>
<dbReference type="RefSeq" id="WP_024265976.1">
    <property type="nucleotide sequence ID" value="NC_002696.2"/>
</dbReference>
<dbReference type="SMR" id="P12290"/>
<dbReference type="STRING" id="190650.CC_3544"/>
<dbReference type="EnsemblBacteria" id="AAK25506">
    <property type="protein sequence ID" value="AAK25506"/>
    <property type="gene ID" value="CC_3544"/>
</dbReference>
<dbReference type="KEGG" id="ccr:CC_3544"/>
<dbReference type="PATRIC" id="fig|190650.5.peg.3549"/>
<dbReference type="eggNOG" id="COG0133">
    <property type="taxonomic scope" value="Bacteria"/>
</dbReference>
<dbReference type="HOGENOM" id="CLU_016734_3_1_5"/>
<dbReference type="UniPathway" id="UPA00035">
    <property type="reaction ID" value="UER00044"/>
</dbReference>
<dbReference type="Proteomes" id="UP000001816">
    <property type="component" value="Chromosome"/>
</dbReference>
<dbReference type="GO" id="GO:0005737">
    <property type="term" value="C:cytoplasm"/>
    <property type="evidence" value="ECO:0007669"/>
    <property type="project" value="TreeGrafter"/>
</dbReference>
<dbReference type="GO" id="GO:0004834">
    <property type="term" value="F:tryptophan synthase activity"/>
    <property type="evidence" value="ECO:0007669"/>
    <property type="project" value="UniProtKB-UniRule"/>
</dbReference>
<dbReference type="CDD" id="cd06446">
    <property type="entry name" value="Trp-synth_B"/>
    <property type="match status" value="1"/>
</dbReference>
<dbReference type="FunFam" id="3.40.50.1100:FF:000001">
    <property type="entry name" value="Tryptophan synthase beta chain"/>
    <property type="match status" value="1"/>
</dbReference>
<dbReference type="FunFam" id="3.40.50.1100:FF:000004">
    <property type="entry name" value="Tryptophan synthase beta chain"/>
    <property type="match status" value="1"/>
</dbReference>
<dbReference type="Gene3D" id="3.40.50.1100">
    <property type="match status" value="2"/>
</dbReference>
<dbReference type="HAMAP" id="MF_00133">
    <property type="entry name" value="Trp_synth_beta"/>
    <property type="match status" value="1"/>
</dbReference>
<dbReference type="InterPro" id="IPR006653">
    <property type="entry name" value="Trp_synth_b_CS"/>
</dbReference>
<dbReference type="InterPro" id="IPR006654">
    <property type="entry name" value="Trp_synth_beta"/>
</dbReference>
<dbReference type="InterPro" id="IPR023026">
    <property type="entry name" value="Trp_synth_beta/beta-like"/>
</dbReference>
<dbReference type="InterPro" id="IPR001926">
    <property type="entry name" value="TrpB-like_PALP"/>
</dbReference>
<dbReference type="InterPro" id="IPR036052">
    <property type="entry name" value="TrpB-like_PALP_sf"/>
</dbReference>
<dbReference type="NCBIfam" id="TIGR00263">
    <property type="entry name" value="trpB"/>
    <property type="match status" value="1"/>
</dbReference>
<dbReference type="PANTHER" id="PTHR48077:SF3">
    <property type="entry name" value="TRYPTOPHAN SYNTHASE"/>
    <property type="match status" value="1"/>
</dbReference>
<dbReference type="PANTHER" id="PTHR48077">
    <property type="entry name" value="TRYPTOPHAN SYNTHASE-RELATED"/>
    <property type="match status" value="1"/>
</dbReference>
<dbReference type="Pfam" id="PF00291">
    <property type="entry name" value="PALP"/>
    <property type="match status" value="1"/>
</dbReference>
<dbReference type="PIRSF" id="PIRSF001413">
    <property type="entry name" value="Trp_syn_beta"/>
    <property type="match status" value="1"/>
</dbReference>
<dbReference type="SUPFAM" id="SSF53686">
    <property type="entry name" value="Tryptophan synthase beta subunit-like PLP-dependent enzymes"/>
    <property type="match status" value="1"/>
</dbReference>
<dbReference type="PROSITE" id="PS00168">
    <property type="entry name" value="TRP_SYNTHASE_BETA"/>
    <property type="match status" value="1"/>
</dbReference>
<reference key="1">
    <citation type="journal article" date="1988" name="J. Bacteriol.">
        <title>Structure of the Caulobacter crescentus trpFBA operon.</title>
        <authorList>
            <person name="Ross C.M."/>
            <person name="Winkler M.E."/>
        </authorList>
    </citation>
    <scope>NUCLEOTIDE SEQUENCE [GENOMIC DNA]</scope>
</reference>
<reference key="2">
    <citation type="journal article" date="2001" name="Proc. Natl. Acad. Sci. U.S.A.">
        <title>Complete genome sequence of Caulobacter crescentus.</title>
        <authorList>
            <person name="Nierman W.C."/>
            <person name="Feldblyum T.V."/>
            <person name="Laub M.T."/>
            <person name="Paulsen I.T."/>
            <person name="Nelson K.E."/>
            <person name="Eisen J.A."/>
            <person name="Heidelberg J.F."/>
            <person name="Alley M.R.K."/>
            <person name="Ohta N."/>
            <person name="Maddock J.R."/>
            <person name="Potocka I."/>
            <person name="Nelson W.C."/>
            <person name="Newton A."/>
            <person name="Stephens C."/>
            <person name="Phadke N.D."/>
            <person name="Ely B."/>
            <person name="DeBoy R.T."/>
            <person name="Dodson R.J."/>
            <person name="Durkin A.S."/>
            <person name="Gwinn M.L."/>
            <person name="Haft D.H."/>
            <person name="Kolonay J.F."/>
            <person name="Smit J."/>
            <person name="Craven M.B."/>
            <person name="Khouri H.M."/>
            <person name="Shetty J."/>
            <person name="Berry K.J."/>
            <person name="Utterback T.R."/>
            <person name="Tran K."/>
            <person name="Wolf A.M."/>
            <person name="Vamathevan J.J."/>
            <person name="Ermolaeva M.D."/>
            <person name="White O."/>
            <person name="Salzberg S.L."/>
            <person name="Venter J.C."/>
            <person name="Shapiro L."/>
            <person name="Fraser C.M."/>
        </authorList>
    </citation>
    <scope>NUCLEOTIDE SEQUENCE [LARGE SCALE GENOMIC DNA]</scope>
    <source>
        <strain>ATCC 19089 / CIP 103742 / CB 15</strain>
    </source>
</reference>
<feature type="chain" id="PRO_0000098937" description="Tryptophan synthase beta chain">
    <location>
        <begin position="1"/>
        <end position="406"/>
    </location>
</feature>
<feature type="modified residue" description="N6-(pyridoxal phosphate)lysine" evidence="1">
    <location>
        <position position="99"/>
    </location>
</feature>
<proteinExistence type="inferred from homology"/>
<gene>
    <name type="primary">trpB</name>
    <name type="ordered locus">CC_3544</name>
</gene>
<evidence type="ECO:0000250" key="1"/>
<evidence type="ECO:0000305" key="2"/>
<organism>
    <name type="scientific">Caulobacter vibrioides (strain ATCC 19089 / CIP 103742 / CB 15)</name>
    <name type="common">Caulobacter crescentus</name>
    <dbReference type="NCBI Taxonomy" id="190650"/>
    <lineage>
        <taxon>Bacteria</taxon>
        <taxon>Pseudomonadati</taxon>
        <taxon>Pseudomonadota</taxon>
        <taxon>Alphaproteobacteria</taxon>
        <taxon>Caulobacterales</taxon>
        <taxon>Caulobacteraceae</taxon>
        <taxon>Caulobacter</taxon>
    </lineage>
</organism>
<keyword id="KW-0028">Amino-acid biosynthesis</keyword>
<keyword id="KW-0057">Aromatic amino acid biosynthesis</keyword>
<keyword id="KW-0456">Lyase</keyword>
<keyword id="KW-0663">Pyridoxal phosphate</keyword>
<keyword id="KW-1185">Reference proteome</keyword>
<keyword id="KW-0822">Tryptophan biosynthesis</keyword>
<protein>
    <recommendedName>
        <fullName>Tryptophan synthase beta chain</fullName>
        <ecNumber>4.2.1.20</ecNumber>
    </recommendedName>
</protein>
<sequence>MNAPAKPNDYSAYPDAEGRFGGFGGRYVAETLMPLVLDLGKAYADAKADPEFQAQLKSYNTHYAGRPSPLYFAERLTEHFGGAKIYFKRDELNHTGSHKINNALGQILLAMRMGKTRIIAETGAGQHGVATATVCARFGLPCVVYMGATDVERQKPNVFRMNLLGAEVRPVSSGTGTLKDAMNEAMRDWVTNVHDTYYLIGTAAGPHPYPVMVRDFQSVIGAEAREQILEMEGRLPDAVVACIGGGSNAIGLFHPFLGDEGVRLIGVEAAGHGVSTDKHAASLTGGRPGVLHGNRTYLLQDDDGQIIDAHSISAGLDYPGIGPEHSFLHDIGRAEYVSTTDTEALEAFKLCSTLEGIIPALEPAHALARVGEIAQELGKGKIVVMNLCGRGDKDIFTVAEALGRKI</sequence>
<name>TRPB_CAUVC</name>